<proteinExistence type="evidence at transcript level"/>
<keyword id="KW-0119">Carbohydrate metabolism</keyword>
<keyword id="KW-0321">Glycogen metabolism</keyword>
<keyword id="KW-1185">Reference proteome</keyword>
<organism>
    <name type="scientific">Xenopus tropicalis</name>
    <name type="common">Western clawed frog</name>
    <name type="synonym">Silurana tropicalis</name>
    <dbReference type="NCBI Taxonomy" id="8364"/>
    <lineage>
        <taxon>Eukaryota</taxon>
        <taxon>Metazoa</taxon>
        <taxon>Chordata</taxon>
        <taxon>Craniata</taxon>
        <taxon>Vertebrata</taxon>
        <taxon>Euteleostomi</taxon>
        <taxon>Amphibia</taxon>
        <taxon>Batrachia</taxon>
        <taxon>Anura</taxon>
        <taxon>Pipoidea</taxon>
        <taxon>Pipidae</taxon>
        <taxon>Xenopodinae</taxon>
        <taxon>Xenopus</taxon>
        <taxon>Silurana</taxon>
    </lineage>
</organism>
<sequence>MPGDFSVCVCISPPPQPQFHCSPADSLRPCLVPTRRPPDPRKKNVVFADALGLALTSVRHFTRAFFDEEPLVLALASLRALRPLSSPTYTLDFSPPTQDYGRYREQLTRKLVCLEQCAVQGAAVAGTVRVRNVGYEKRVTLRVSYDGWCNHYDLPCTYLFDTRRGGDTDSFSFRMPLPVGTERAEFCICYWCAGEEYWDNNDGKNYSLHKEGKGKGYLQGPYW</sequence>
<feature type="chain" id="PRO_0000285932" description="Protein phosphatase 1 regulatory subunit 3C">
    <location>
        <begin position="1"/>
        <end position="223"/>
    </location>
</feature>
<feature type="domain" description="CBM21" evidence="2">
    <location>
        <begin position="104"/>
        <end position="209"/>
    </location>
</feature>
<gene>
    <name evidence="3" type="primary">ppp1r3c</name>
</gene>
<dbReference type="EMBL" id="BC074693">
    <property type="protein sequence ID" value="AAH74693.1"/>
    <property type="molecule type" value="mRNA"/>
</dbReference>
<dbReference type="RefSeq" id="NP_001005666.1">
    <property type="nucleotide sequence ID" value="NM_001005666.1"/>
</dbReference>
<dbReference type="SMR" id="Q6GL23"/>
<dbReference type="STRING" id="8364.ENSXETP00000041510"/>
<dbReference type="CAZy" id="CBM21">
    <property type="family name" value="Carbohydrate-Binding Module Family 21"/>
</dbReference>
<dbReference type="PaxDb" id="8364-ENSXETP00000036646"/>
<dbReference type="DNASU" id="448158"/>
<dbReference type="GeneID" id="448158"/>
<dbReference type="KEGG" id="xtr:448158"/>
<dbReference type="AGR" id="Xenbase:XB-GENE-876322"/>
<dbReference type="CTD" id="448158"/>
<dbReference type="Xenbase" id="XB-GENE-876322">
    <property type="gene designation" value="ppp1r3c.2"/>
</dbReference>
<dbReference type="eggNOG" id="KOG3986">
    <property type="taxonomic scope" value="Eukaryota"/>
</dbReference>
<dbReference type="HOGENOM" id="CLU_040215_2_2_1"/>
<dbReference type="InParanoid" id="Q6GL23"/>
<dbReference type="OrthoDB" id="1881at2759"/>
<dbReference type="TreeFam" id="TF105537"/>
<dbReference type="Proteomes" id="UP000008143">
    <property type="component" value="Chromosome 3"/>
</dbReference>
<dbReference type="Bgee" id="ENSXETG00000016808">
    <property type="expression patterns" value="Expressed in 2-cell stage embryo and 14 other cell types or tissues"/>
</dbReference>
<dbReference type="GO" id="GO:0005977">
    <property type="term" value="P:glycogen metabolic process"/>
    <property type="evidence" value="ECO:0007669"/>
    <property type="project" value="UniProtKB-KW"/>
</dbReference>
<dbReference type="Gene3D" id="2.60.40.2440">
    <property type="entry name" value="Carbohydrate binding type-21 domain"/>
    <property type="match status" value="1"/>
</dbReference>
<dbReference type="InterPro" id="IPR005036">
    <property type="entry name" value="CBM21_dom"/>
</dbReference>
<dbReference type="InterPro" id="IPR038175">
    <property type="entry name" value="CBM21_dom_sf"/>
</dbReference>
<dbReference type="InterPro" id="IPR017434">
    <property type="entry name" value="Pase-1_reg-su_3B/C/D_met"/>
</dbReference>
<dbReference type="InterPro" id="IPR050782">
    <property type="entry name" value="PP1_regulatory_subunit_3"/>
</dbReference>
<dbReference type="PANTHER" id="PTHR12307">
    <property type="entry name" value="PROTEIN PHOSPHATASE 1 REGULATORY SUBUNIT"/>
    <property type="match status" value="1"/>
</dbReference>
<dbReference type="PANTHER" id="PTHR12307:SF54">
    <property type="entry name" value="PROTEIN PHOSPHATASE 1 REGULATORY SUBUNIT 3C"/>
    <property type="match status" value="1"/>
</dbReference>
<dbReference type="Pfam" id="PF03370">
    <property type="entry name" value="CBM_21"/>
    <property type="match status" value="1"/>
</dbReference>
<dbReference type="PIRSF" id="PIRSF038207">
    <property type="entry name" value="PP1_GT_animal"/>
    <property type="match status" value="1"/>
</dbReference>
<dbReference type="PROSITE" id="PS51159">
    <property type="entry name" value="CBM21"/>
    <property type="match status" value="1"/>
</dbReference>
<reference evidence="3" key="1">
    <citation type="submission" date="2004-06" db="EMBL/GenBank/DDBJ databases">
        <authorList>
            <consortium name="NIH - Xenopus Gene Collection (XGC) project"/>
        </authorList>
    </citation>
    <scope>NUCLEOTIDE SEQUENCE [LARGE SCALE MRNA]</scope>
    <source>
        <tissue evidence="3">Embryo</tissue>
    </source>
</reference>
<name>PPR3C_XENTR</name>
<accession>Q6GL23</accession>
<protein>
    <recommendedName>
        <fullName>Protein phosphatase 1 regulatory subunit 3C</fullName>
    </recommendedName>
</protein>
<evidence type="ECO:0000250" key="1">
    <source>
        <dbReference type="UniProtKB" id="Q7TMB3"/>
    </source>
</evidence>
<evidence type="ECO:0000255" key="2">
    <source>
        <dbReference type="PROSITE-ProRule" id="PRU00491"/>
    </source>
</evidence>
<evidence type="ECO:0000312" key="3">
    <source>
        <dbReference type="EMBL" id="AAH74693.1"/>
    </source>
</evidence>
<comment type="function">
    <text evidence="1">Acts as a glycogen-targeting subunit for PP1 and regulates its activity. Activates glycogen synthase, reduces glycogen phosphorylase activity and limits glycogen breakdown (By similarity).</text>
</comment>
<comment type="subunit">
    <text evidence="1">Interacts with PPP1CC catalytic subunit of PP1 and associates with glycogen. Forms complexes with glycogen phosphorylase, glycogen synthase and phosphorylase kinase which is necessary for its regulation of PP1 activity (By similarity).</text>
</comment>
<comment type="domain">
    <text evidence="1">The N-terminal region is required for binding to PP1, the central region is required for binding to glycogen and the C-terminal region is required for binding to glycogen phosphorylase, glycogen synthase and phosphorylase kinase.</text>
</comment>